<evidence type="ECO:0000255" key="1">
    <source>
        <dbReference type="HAMAP-Rule" id="MF_01309"/>
    </source>
</evidence>
<evidence type="ECO:0000256" key="2">
    <source>
        <dbReference type="SAM" id="MobiDB-lite"/>
    </source>
</evidence>
<evidence type="ECO:0000305" key="3"/>
<comment type="function">
    <text evidence="1">Binds the lower part of the 30S subunit head. Binds mRNA in the 70S ribosome, positioning it for translation.</text>
</comment>
<comment type="subunit">
    <text evidence="1">Part of the 30S ribosomal subunit. Forms a tight complex with proteins S10 and S14.</text>
</comment>
<comment type="similarity">
    <text evidence="1">Belongs to the universal ribosomal protein uS3 family.</text>
</comment>
<proteinExistence type="inferred from homology"/>
<feature type="chain" id="PRO_1000086113" description="Small ribosomal subunit protein uS3">
    <location>
        <begin position="1"/>
        <end position="278"/>
    </location>
</feature>
<feature type="domain" description="KH type-2" evidence="1">
    <location>
        <begin position="39"/>
        <end position="107"/>
    </location>
</feature>
<feature type="region of interest" description="Disordered" evidence="2">
    <location>
        <begin position="255"/>
        <end position="278"/>
    </location>
</feature>
<protein>
    <recommendedName>
        <fullName evidence="1">Small ribosomal subunit protein uS3</fullName>
    </recommendedName>
    <alternativeName>
        <fullName evidence="3">30S ribosomal protein S3</fullName>
    </alternativeName>
</protein>
<name>RS3_DEHMB</name>
<keyword id="KW-0687">Ribonucleoprotein</keyword>
<keyword id="KW-0689">Ribosomal protein</keyword>
<keyword id="KW-0694">RNA-binding</keyword>
<keyword id="KW-0699">rRNA-binding</keyword>
<accession>A5FRY1</accession>
<sequence>MGRKVHPIGFRLGIIKDWSAKWHASDKNFAECLTEDLKLRKAISKKYVDAAISQVDIERQSNKVTVSVRTARPGIVIGRGGQRVDEMRHFLEDLIGKKVQLNIVEISQAELDAFLVARSVAEQIERRVAYRRAMKQAIFRSMQAGAKGIKICASGRLGGVEIARREVMHEGRVPLHTLRADIDYGCTRAHTALGDVGIKVWVYRGDILPEAKEKSESAVTEMAAVMADAPAAVVTETKVADIAAKPKRVVKKAEAEIPAEEKPKRVVKKAENITKEEE</sequence>
<dbReference type="EMBL" id="CP000688">
    <property type="protein sequence ID" value="ABQ17042.1"/>
    <property type="molecule type" value="Genomic_DNA"/>
</dbReference>
<dbReference type="SMR" id="A5FRY1"/>
<dbReference type="KEGG" id="deb:DehaBAV1_0457"/>
<dbReference type="PATRIC" id="fig|216389.18.peg.500"/>
<dbReference type="HOGENOM" id="CLU_058591_0_2_0"/>
<dbReference type="GO" id="GO:0022627">
    <property type="term" value="C:cytosolic small ribosomal subunit"/>
    <property type="evidence" value="ECO:0007669"/>
    <property type="project" value="TreeGrafter"/>
</dbReference>
<dbReference type="GO" id="GO:0003729">
    <property type="term" value="F:mRNA binding"/>
    <property type="evidence" value="ECO:0007669"/>
    <property type="project" value="UniProtKB-UniRule"/>
</dbReference>
<dbReference type="GO" id="GO:0019843">
    <property type="term" value="F:rRNA binding"/>
    <property type="evidence" value="ECO:0007669"/>
    <property type="project" value="UniProtKB-UniRule"/>
</dbReference>
<dbReference type="GO" id="GO:0003735">
    <property type="term" value="F:structural constituent of ribosome"/>
    <property type="evidence" value="ECO:0007669"/>
    <property type="project" value="InterPro"/>
</dbReference>
<dbReference type="GO" id="GO:0006412">
    <property type="term" value="P:translation"/>
    <property type="evidence" value="ECO:0007669"/>
    <property type="project" value="UniProtKB-UniRule"/>
</dbReference>
<dbReference type="CDD" id="cd02412">
    <property type="entry name" value="KH-II_30S_S3"/>
    <property type="match status" value="1"/>
</dbReference>
<dbReference type="FunFam" id="3.30.300.20:FF:000001">
    <property type="entry name" value="30S ribosomal protein S3"/>
    <property type="match status" value="1"/>
</dbReference>
<dbReference type="Gene3D" id="3.30.300.20">
    <property type="match status" value="1"/>
</dbReference>
<dbReference type="Gene3D" id="3.30.1140.32">
    <property type="entry name" value="Ribosomal protein S3, C-terminal domain"/>
    <property type="match status" value="1"/>
</dbReference>
<dbReference type="HAMAP" id="MF_01309_B">
    <property type="entry name" value="Ribosomal_uS3_B"/>
    <property type="match status" value="1"/>
</dbReference>
<dbReference type="InterPro" id="IPR004087">
    <property type="entry name" value="KH_dom"/>
</dbReference>
<dbReference type="InterPro" id="IPR015946">
    <property type="entry name" value="KH_dom-like_a/b"/>
</dbReference>
<dbReference type="InterPro" id="IPR004044">
    <property type="entry name" value="KH_dom_type_2"/>
</dbReference>
<dbReference type="InterPro" id="IPR009019">
    <property type="entry name" value="KH_sf_prok-type"/>
</dbReference>
<dbReference type="InterPro" id="IPR036419">
    <property type="entry name" value="Ribosomal_S3_C_sf"/>
</dbReference>
<dbReference type="InterPro" id="IPR005704">
    <property type="entry name" value="Ribosomal_uS3_bac-typ"/>
</dbReference>
<dbReference type="InterPro" id="IPR001351">
    <property type="entry name" value="Ribosomal_uS3_C"/>
</dbReference>
<dbReference type="InterPro" id="IPR018280">
    <property type="entry name" value="Ribosomal_uS3_CS"/>
</dbReference>
<dbReference type="NCBIfam" id="TIGR01009">
    <property type="entry name" value="rpsC_bact"/>
    <property type="match status" value="1"/>
</dbReference>
<dbReference type="PANTHER" id="PTHR11760">
    <property type="entry name" value="30S/40S RIBOSOMAL PROTEIN S3"/>
    <property type="match status" value="1"/>
</dbReference>
<dbReference type="PANTHER" id="PTHR11760:SF19">
    <property type="entry name" value="SMALL RIBOSOMAL SUBUNIT PROTEIN US3C"/>
    <property type="match status" value="1"/>
</dbReference>
<dbReference type="Pfam" id="PF07650">
    <property type="entry name" value="KH_2"/>
    <property type="match status" value="1"/>
</dbReference>
<dbReference type="Pfam" id="PF00189">
    <property type="entry name" value="Ribosomal_S3_C"/>
    <property type="match status" value="1"/>
</dbReference>
<dbReference type="SMART" id="SM00322">
    <property type="entry name" value="KH"/>
    <property type="match status" value="1"/>
</dbReference>
<dbReference type="SUPFAM" id="SSF54814">
    <property type="entry name" value="Prokaryotic type KH domain (KH-domain type II)"/>
    <property type="match status" value="1"/>
</dbReference>
<dbReference type="SUPFAM" id="SSF54821">
    <property type="entry name" value="Ribosomal protein S3 C-terminal domain"/>
    <property type="match status" value="1"/>
</dbReference>
<dbReference type="PROSITE" id="PS50823">
    <property type="entry name" value="KH_TYPE_2"/>
    <property type="match status" value="1"/>
</dbReference>
<dbReference type="PROSITE" id="PS00548">
    <property type="entry name" value="RIBOSOMAL_S3"/>
    <property type="match status" value="1"/>
</dbReference>
<reference key="1">
    <citation type="submission" date="2007-05" db="EMBL/GenBank/DDBJ databases">
        <title>Complete sequence of Dehalococcoides sp. BAV1.</title>
        <authorList>
            <consortium name="US DOE Joint Genome Institute"/>
            <person name="Copeland A."/>
            <person name="Lucas S."/>
            <person name="Lapidus A."/>
            <person name="Barry K."/>
            <person name="Detter J.C."/>
            <person name="Glavina del Rio T."/>
            <person name="Hammon N."/>
            <person name="Israni S."/>
            <person name="Pitluck S."/>
            <person name="Lowry S."/>
            <person name="Clum A."/>
            <person name="Schmutz J."/>
            <person name="Larimer F."/>
            <person name="Land M."/>
            <person name="Hauser L."/>
            <person name="Kyrpides N."/>
            <person name="Kim E."/>
            <person name="Ritalahti K.M."/>
            <person name="Loeffler F."/>
            <person name="Richardson P."/>
        </authorList>
    </citation>
    <scope>NUCLEOTIDE SEQUENCE [LARGE SCALE GENOMIC DNA]</scope>
    <source>
        <strain>ATCC BAA-2100 / JCM 16839 / KCTC 5957 / BAV1</strain>
    </source>
</reference>
<organism>
    <name type="scientific">Dehalococcoides mccartyi (strain ATCC BAA-2100 / JCM 16839 / KCTC 5957 / BAV1)</name>
    <dbReference type="NCBI Taxonomy" id="216389"/>
    <lineage>
        <taxon>Bacteria</taxon>
        <taxon>Bacillati</taxon>
        <taxon>Chloroflexota</taxon>
        <taxon>Dehalococcoidia</taxon>
        <taxon>Dehalococcoidales</taxon>
        <taxon>Dehalococcoidaceae</taxon>
        <taxon>Dehalococcoides</taxon>
    </lineage>
</organism>
<gene>
    <name evidence="1" type="primary">rpsC</name>
    <name type="ordered locus">DehaBAV1_0457</name>
</gene>